<accession>D3ZVV1</accession>
<name>KHDC3_RAT</name>
<reference key="1">
    <citation type="submission" date="2005-07" db="EMBL/GenBank/DDBJ databases">
        <authorList>
            <person name="Mural R.J."/>
            <person name="Adams M.D."/>
            <person name="Myers E.W."/>
            <person name="Smith H.O."/>
            <person name="Venter J.C."/>
        </authorList>
    </citation>
    <scope>NUCLEOTIDE SEQUENCE [LARGE SCALE GENOMIC DNA]</scope>
</reference>
<reference key="2">
    <citation type="journal article" date="2007" name="Genomics">
        <title>Atypical structure and phylogenomic evolution of the new eutherian oocyte- and embryo-expressed KHDC1/DPPA5/ECAT1/OOEP gene family.</title>
        <authorList>
            <person name="Pierre A."/>
            <person name="Gautier M."/>
            <person name="Callebaut I."/>
            <person name="Bontoux M."/>
            <person name="Jeanpierre E."/>
            <person name="Pontarotti P."/>
            <person name="Monget P."/>
        </authorList>
    </citation>
    <scope>IDENTIFICATION</scope>
</reference>
<organism>
    <name type="scientific">Rattus norvegicus</name>
    <name type="common">Rat</name>
    <dbReference type="NCBI Taxonomy" id="10116"/>
    <lineage>
        <taxon>Eukaryota</taxon>
        <taxon>Metazoa</taxon>
        <taxon>Chordata</taxon>
        <taxon>Craniata</taxon>
        <taxon>Vertebrata</taxon>
        <taxon>Euteleostomi</taxon>
        <taxon>Mammalia</taxon>
        <taxon>Eutheria</taxon>
        <taxon>Euarchontoglires</taxon>
        <taxon>Glires</taxon>
        <taxon>Rodentia</taxon>
        <taxon>Myomorpha</taxon>
        <taxon>Muroidea</taxon>
        <taxon>Muridae</taxon>
        <taxon>Murinae</taxon>
        <taxon>Rattus</taxon>
    </lineage>
</organism>
<keyword id="KW-0131">Cell cycle</keyword>
<keyword id="KW-0158">Chromosome</keyword>
<keyword id="KW-0963">Cytoplasm</keyword>
<keyword id="KW-0206">Cytoskeleton</keyword>
<keyword id="KW-0217">Developmental protein</keyword>
<keyword id="KW-0496">Mitochondrion</keyword>
<keyword id="KW-0539">Nucleus</keyword>
<keyword id="KW-0597">Phosphoprotein</keyword>
<keyword id="KW-1185">Reference proteome</keyword>
<evidence type="ECO:0000250" key="1">
    <source>
        <dbReference type="UniProtKB" id="Q587J8"/>
    </source>
</evidence>
<evidence type="ECO:0000250" key="2">
    <source>
        <dbReference type="UniProtKB" id="Q9CWU5"/>
    </source>
</evidence>
<evidence type="ECO:0000303" key="3">
    <source>
    </source>
</evidence>
<evidence type="ECO:0000305" key="4"/>
<evidence type="ECO:0000312" key="5">
    <source>
        <dbReference type="RGD" id="1311617"/>
    </source>
</evidence>
<dbReference type="EMBL" id="CH474041">
    <property type="protein sequence ID" value="EDL84106.1"/>
    <property type="molecule type" value="Genomic_DNA"/>
</dbReference>
<dbReference type="RefSeq" id="NP_001100307.1">
    <property type="nucleotide sequence ID" value="NM_001106837.1"/>
</dbReference>
<dbReference type="SMR" id="D3ZVV1"/>
<dbReference type="FunCoup" id="D3ZVV1">
    <property type="interactions" value="7"/>
</dbReference>
<dbReference type="STRING" id="10116.ENSRNOP00000074731"/>
<dbReference type="PhosphoSitePlus" id="D3ZVV1"/>
<dbReference type="PaxDb" id="10116-ENSRNOP00000032705"/>
<dbReference type="Ensembl" id="ENSRNOT00000113238.1">
    <property type="protein sequence ID" value="ENSRNOP00000088813.1"/>
    <property type="gene ID" value="ENSRNOG00000054460.2"/>
</dbReference>
<dbReference type="GeneID" id="300826"/>
<dbReference type="KEGG" id="rno:300826"/>
<dbReference type="UCSC" id="RGD:1311617">
    <property type="organism name" value="rat"/>
</dbReference>
<dbReference type="AGR" id="RGD:1311617"/>
<dbReference type="CTD" id="66991"/>
<dbReference type="RGD" id="1311617">
    <property type="gene designation" value="Khdc3"/>
</dbReference>
<dbReference type="eggNOG" id="ENOG502QQIF">
    <property type="taxonomic scope" value="Eukaryota"/>
</dbReference>
<dbReference type="GeneTree" id="ENSGT00940000162601"/>
<dbReference type="HOGENOM" id="CLU_050702_0_0_1"/>
<dbReference type="InParanoid" id="D3ZVV1"/>
<dbReference type="OMA" id="AVWRADY"/>
<dbReference type="OrthoDB" id="9790568at2759"/>
<dbReference type="PhylomeDB" id="D3ZVV1"/>
<dbReference type="TreeFam" id="TF338690"/>
<dbReference type="PRO" id="PR:D3ZVV1"/>
<dbReference type="Proteomes" id="UP000002494">
    <property type="component" value="Chromosome 8"/>
</dbReference>
<dbReference type="Proteomes" id="UP000234681">
    <property type="component" value="Chromosome 8"/>
</dbReference>
<dbReference type="Bgee" id="ENSRNOG00000054460">
    <property type="expression patterns" value="Expressed in thymus and 4 other cell types or tissues"/>
</dbReference>
<dbReference type="GO" id="GO:0005938">
    <property type="term" value="C:cell cortex"/>
    <property type="evidence" value="ECO:0000250"/>
    <property type="project" value="UniProtKB"/>
</dbReference>
<dbReference type="GO" id="GO:0005813">
    <property type="term" value="C:centrosome"/>
    <property type="evidence" value="ECO:0000250"/>
    <property type="project" value="UniProtKB"/>
</dbReference>
<dbReference type="GO" id="GO:0005694">
    <property type="term" value="C:chromosome"/>
    <property type="evidence" value="ECO:0007669"/>
    <property type="project" value="UniProtKB-SubCell"/>
</dbReference>
<dbReference type="GO" id="GO:0005737">
    <property type="term" value="C:cytoplasm"/>
    <property type="evidence" value="ECO:0000250"/>
    <property type="project" value="UniProtKB"/>
</dbReference>
<dbReference type="GO" id="GO:0140095">
    <property type="term" value="C:cytoplasmic lattice"/>
    <property type="evidence" value="ECO:0000250"/>
    <property type="project" value="UniProtKB"/>
</dbReference>
<dbReference type="GO" id="GO:0005739">
    <property type="term" value="C:mitochondrion"/>
    <property type="evidence" value="ECO:0000250"/>
    <property type="project" value="UniProtKB"/>
</dbReference>
<dbReference type="GO" id="GO:0005634">
    <property type="term" value="C:nucleus"/>
    <property type="evidence" value="ECO:0000250"/>
    <property type="project" value="UniProtKB"/>
</dbReference>
<dbReference type="GO" id="GO:0032991">
    <property type="term" value="C:protein-containing complex"/>
    <property type="evidence" value="ECO:0000266"/>
    <property type="project" value="RGD"/>
</dbReference>
<dbReference type="GO" id="GO:0106333">
    <property type="term" value="C:subcortical maternal complex"/>
    <property type="evidence" value="ECO:0000266"/>
    <property type="project" value="RGD"/>
</dbReference>
<dbReference type="GO" id="GO:0003723">
    <property type="term" value="F:RNA binding"/>
    <property type="evidence" value="ECO:0007669"/>
    <property type="project" value="InterPro"/>
</dbReference>
<dbReference type="GO" id="GO:0140094">
    <property type="term" value="F:structural constituent of cytoplasmic lattice"/>
    <property type="evidence" value="ECO:0000250"/>
    <property type="project" value="UniProtKB"/>
</dbReference>
<dbReference type="GO" id="GO:0007015">
    <property type="term" value="P:actin filament organization"/>
    <property type="evidence" value="ECO:0000250"/>
    <property type="project" value="UniProtKB"/>
</dbReference>
<dbReference type="GO" id="GO:0051656">
    <property type="term" value="P:establishment of organelle localization"/>
    <property type="evidence" value="ECO:0000250"/>
    <property type="project" value="UniProtKB"/>
</dbReference>
<dbReference type="GO" id="GO:0090307">
    <property type="term" value="P:mitotic spindle assembly"/>
    <property type="evidence" value="ECO:0000266"/>
    <property type="project" value="RGD"/>
</dbReference>
<dbReference type="GO" id="GO:0007094">
    <property type="term" value="P:mitotic spindle assembly checkpoint signaling"/>
    <property type="evidence" value="ECO:0000266"/>
    <property type="project" value="RGD"/>
</dbReference>
<dbReference type="GO" id="GO:0043066">
    <property type="term" value="P:negative regulation of apoptotic process"/>
    <property type="evidence" value="ECO:0000250"/>
    <property type="project" value="UniProtKB"/>
</dbReference>
<dbReference type="GO" id="GO:1900006">
    <property type="term" value="P:positive regulation of dendrite development"/>
    <property type="evidence" value="ECO:0000250"/>
    <property type="project" value="UniProtKB"/>
</dbReference>
<dbReference type="GO" id="GO:2000781">
    <property type="term" value="P:positive regulation of double-strand break repair"/>
    <property type="evidence" value="ECO:0000250"/>
    <property type="project" value="UniProtKB"/>
</dbReference>
<dbReference type="GO" id="GO:1905168">
    <property type="term" value="P:positive regulation of double-strand break repair via homologous recombination"/>
    <property type="evidence" value="ECO:0000250"/>
    <property type="project" value="UniProtKB"/>
</dbReference>
<dbReference type="GO" id="GO:0040019">
    <property type="term" value="P:positive regulation of embryonic development"/>
    <property type="evidence" value="ECO:0000250"/>
    <property type="project" value="UniProtKB"/>
</dbReference>
<dbReference type="GO" id="GO:0050769">
    <property type="term" value="P:positive regulation of neurogenesis"/>
    <property type="evidence" value="ECO:0000250"/>
    <property type="project" value="UniProtKB"/>
</dbReference>
<dbReference type="GO" id="GO:0140089">
    <property type="term" value="P:protein storage"/>
    <property type="evidence" value="ECO:0000250"/>
    <property type="project" value="UniProtKB"/>
</dbReference>
<dbReference type="GO" id="GO:0032880">
    <property type="term" value="P:regulation of protein localization"/>
    <property type="evidence" value="ECO:0000250"/>
    <property type="project" value="UniProtKB"/>
</dbReference>
<dbReference type="GO" id="GO:0031297">
    <property type="term" value="P:replication fork processing"/>
    <property type="evidence" value="ECO:0000250"/>
    <property type="project" value="UniProtKB"/>
</dbReference>
<dbReference type="CDD" id="cd12795">
    <property type="entry name" value="FILIA_N_like"/>
    <property type="match status" value="1"/>
</dbReference>
<dbReference type="Gene3D" id="3.30.1370.10">
    <property type="entry name" value="K Homology domain, type 1"/>
    <property type="match status" value="1"/>
</dbReference>
<dbReference type="InterPro" id="IPR036612">
    <property type="entry name" value="KH_dom_type_1_sf"/>
</dbReference>
<dbReference type="InterPro" id="IPR051778">
    <property type="entry name" value="KHDC1"/>
</dbReference>
<dbReference type="InterPro" id="IPR031952">
    <property type="entry name" value="MOEP19_KH-like"/>
</dbReference>
<dbReference type="PANTHER" id="PTHR19447:SF15">
    <property type="entry name" value="KH DOMAIN-CONTAINING PROTEIN 3"/>
    <property type="match status" value="1"/>
</dbReference>
<dbReference type="PANTHER" id="PTHR19447">
    <property type="entry name" value="OOCYTE-EXPRESSED PROTEIN HOMOLOG-RELATED"/>
    <property type="match status" value="1"/>
</dbReference>
<dbReference type="Pfam" id="PF16005">
    <property type="entry name" value="MOEP19"/>
    <property type="match status" value="1"/>
</dbReference>
<feature type="chain" id="PRO_0000407379" description="KH domain-containing protein 3">
    <location>
        <begin position="1"/>
        <end position="434"/>
    </location>
</feature>
<feature type="domain" description="KH; atypical">
    <location>
        <begin position="40"/>
        <end position="118"/>
    </location>
</feature>
<feature type="region of interest" description="Involved in RNA binding" evidence="2">
    <location>
        <begin position="1"/>
        <end position="39"/>
    </location>
</feature>
<feature type="region of interest" description="Required for interaction with NUMA1 and regulation of apoptosis in response to DNA damage" evidence="2">
    <location>
        <begin position="334"/>
        <end position="434"/>
    </location>
</feature>
<feature type="modified residue" description="Phosphothreonine" evidence="1">
    <location>
        <position position="267"/>
    </location>
</feature>
<feature type="modified residue" description="Phosphothreonine" evidence="1">
    <location>
        <position position="279"/>
    </location>
</feature>
<protein>
    <recommendedName>
        <fullName evidence="1">KH domain-containing protein 3</fullName>
    </recommendedName>
    <alternativeName>
        <fullName evidence="2">Protein Filia</fullName>
    </alternativeName>
</protein>
<gene>
    <name evidence="5" type="primary">Khdc3</name>
    <name evidence="3" type="synonym">Ecat1</name>
</gene>
<sequence>MATLKTFRTLVQLKHKLGKAYEIVGEPRLPKWFHVEYLEDPKKMYVEPTLVEIMFGKDGEHIPHVECTLHVLIHVNVWGPEKQAEILIFGPPNFQKDVAQMLSNVAHFCRMKLMEKEALEAGVERRLMAASKATTQPTPVKVRDAATQVAPVQVRDAAIQPAPVKVRDAATQVAPVQVHEVATQPVPVQVRDAATQPVPVRVRDAATQPVPVRVRDAATQPVPVRVRDAATQPVPVRVRDAATEPVPVQVRDAATQPAPVQVRDAATQPAPVQVRDAATQPAPVQVRDAATQPAPVQVRDAATQPAPVQVRDAATQPAPVQVRDAATQPAPVQVREAATQQTPVEVADDTQLVQLKAGEAFAQHTSGKVHQDVNGQSPIEVCEGATQRHSVDASEALSQKCPEDLEGGDTETSLDDSYVIIRPSRAVWEPFVML</sequence>
<comment type="function">
    <text evidence="2">Component of the subcortical maternal complex (SCMC), a multiprotein complex that plays a key role in early embryonic development. The SCMC complex is a structural constituent of cytoplasmic lattices, which consist in fibrous structures found in the cytoplasm of oocytes and preimplantation embryos. They are required to store maternal proteins critical for embryonic development, such as proteins that control epigenetic reprogramming of the preimplantation embryo, and prevent their degradation or activation. KHDC3 ensures proper spindle assembly by regulating the localization of AURKA via RHOA signaling and of PLK1 via a RHOA-independent process. Required for the localization of MAD2L1 to kinetochores to enable spindle assembly checkpoint function. As part of the OOEP-KHDC3 scaffold, recruits BLM and TRIM25 to DNA replication forks, thereby promoting the ubiquitination of BLM by TRIM25, enhancing BLM retainment at replication forks and therefore promoting stalled replication fork restart. Regulates homologous recombination-mediated DNA repair via recruitment of RAD51 to sites of DNA double-strand breaks, and sustainment of PARP1 activity, which in turn modulates downstream ATM or ATR activation. Activation of ATM or ATR in response to DNA double-strand breaks may be cell-type specific. Its role in DNA double-strand break repair is independent of its role in restarting stalled replication forks. Promotes neural stem cell neurogenesis and neuronal differentiation in the hippocampus. May regulate normal development of learning, memory and anxiety. Capable of binding RNA.</text>
</comment>
<comment type="subunit">
    <text evidence="1 2">Component of the subcortical maternal complex (SCMC), at least composed of NLRP5, KHDC3, OOEP, and TLE6 (By similarity). Within the complex, interacts with NLRP5, KHDC3 and TLE6 (By similarity). The SCMC may facilitate translocation of its components between the nuclear and cytoplasmic compartments (By similarity). Forms a scaffold complex with OOEP/FLOPED, and interacts with BLM and TRIM25 at DNA replication forks (By similarity). Interacts with PARP1; the interaction is increased following the formation of DNA double-strand breaks (By similarity). Interacts (via C-terminus) with NUMA1 (By similarity).</text>
</comment>
<comment type="subcellular location">
    <subcellularLocation>
        <location evidence="2">Cytoplasm</location>
    </subcellularLocation>
    <subcellularLocation>
        <location evidence="2">Cytoplasm</location>
        <location evidence="2">Cell cortex</location>
    </subcellularLocation>
    <subcellularLocation>
        <location evidence="2">Nucleus</location>
    </subcellularLocation>
    <subcellularLocation>
        <location evidence="2">Mitochondrion</location>
    </subcellularLocation>
    <subcellularLocation>
        <location evidence="2">Cytoplasm</location>
        <location evidence="2">Cytoskeleton</location>
        <location evidence="2">Microtubule organizing center</location>
        <location evidence="2">Centrosome</location>
    </subcellularLocation>
    <subcellularLocation>
        <location evidence="1">Chromosome</location>
    </subcellularLocation>
    <text evidence="1 2">Core component of cytoplasmic lattices in oocytes (By similarity). Expressed in the subcortex of oocytes. Located throughout the cell cortex of ovulated eggs in a complex with NLRP5. After fertilization, restricted to the apical cortex and excluded from regions of cell-cell contact. Localized to centrosomes during interphase and mitosis (By similarity). Localizes to sites of DNA double-strand break repair (By similarity).</text>
</comment>
<comment type="domain">
    <text evidence="2">Contains 1 atypical KH domain, which is still capable of binding RNA.</text>
</comment>
<comment type="similarity">
    <text evidence="4">Belongs to the KHDC1 family.</text>
</comment>
<proteinExistence type="inferred from homology"/>